<feature type="signal peptide" evidence="3">
    <location>
        <begin position="1"/>
        <end position="13"/>
    </location>
</feature>
<feature type="chain" id="PRO_0000032951" description="Placental prolactin-related protein 3">
    <location>
        <begin position="14"/>
        <end position="213"/>
    </location>
</feature>
<feature type="glycosylation site" description="N-linked (GlcNAc...) asparagine" evidence="2">
    <location>
        <position position="45"/>
    </location>
</feature>
<feature type="glycosylation site" description="N-linked (GlcNAc...) asparagine" evidence="2">
    <location>
        <position position="67"/>
    </location>
</feature>
<feature type="disulfide bond" evidence="1">
    <location>
        <begin position="72"/>
        <end position="190"/>
    </location>
</feature>
<feature type="disulfide bond" evidence="1">
    <location>
        <begin position="207"/>
        <end position="213"/>
    </location>
</feature>
<reference key="1">
    <citation type="journal article" date="1989" name="Biochemistry">
        <title>A subfamily of bovine prolactin-related transcripts distinct from placental lactogen in the fetal placenta.</title>
        <authorList>
            <person name="Kessler M.A."/>
            <person name="Milosavljevic M."/>
            <person name="Zieler C.G."/>
            <person name="Schuler L.A."/>
        </authorList>
    </citation>
    <scope>NUCLEOTIDE SEQUENCE [MRNA]</scope>
    <source>
        <tissue>Placenta</tissue>
    </source>
</reference>
<name>PLRP3_BOVIN</name>
<gene>
    <name type="primary">PRP3</name>
</gene>
<comment type="function">
    <text>Placental prolactin-related proteins may play a specific role during gestation.</text>
</comment>
<comment type="subcellular location">
    <subcellularLocation>
        <location>Secreted</location>
    </subcellularLocation>
</comment>
<comment type="similarity">
    <text evidence="4">Belongs to the somatotropin/prolactin family.</text>
</comment>
<protein>
    <recommendedName>
        <fullName>Placental prolactin-related protein 3</fullName>
    </recommendedName>
    <alternativeName>
        <fullName>PRC-III</fullName>
    </alternativeName>
    <alternativeName>
        <fullName>bPRCIII</fullName>
    </alternativeName>
</protein>
<sequence length="213" mass="25016">MVMSNLLLCQVNSCPSCCPDVFDIPLESLTHLFLNASRLSHDIVNHTTIMFHEFDEKYAQNQPYTINATKSCHTNSLHTPQEREKALRMNNEDLSKWILMLLYSWHRPLYLLVKDLQSMKEVSDTILSSAKENMRKIEELQAFIERQFSQVIYPVIRTIFKARIYWSGLASLVSNDEDVRHSAFYKLFMCLYRDSRKLDMYTEILACRITNTC</sequence>
<proteinExistence type="evidence at transcript level"/>
<accession>P12402</accession>
<keyword id="KW-1015">Disulfide bond</keyword>
<keyword id="KW-0325">Glycoprotein</keyword>
<keyword id="KW-0372">Hormone</keyword>
<keyword id="KW-1185">Reference proteome</keyword>
<keyword id="KW-0964">Secreted</keyword>
<keyword id="KW-0732">Signal</keyword>
<organism>
    <name type="scientific">Bos taurus</name>
    <name type="common">Bovine</name>
    <dbReference type="NCBI Taxonomy" id="9913"/>
    <lineage>
        <taxon>Eukaryota</taxon>
        <taxon>Metazoa</taxon>
        <taxon>Chordata</taxon>
        <taxon>Craniata</taxon>
        <taxon>Vertebrata</taxon>
        <taxon>Euteleostomi</taxon>
        <taxon>Mammalia</taxon>
        <taxon>Eutheria</taxon>
        <taxon>Laurasiatheria</taxon>
        <taxon>Artiodactyla</taxon>
        <taxon>Ruminantia</taxon>
        <taxon>Pecora</taxon>
        <taxon>Bovidae</taxon>
        <taxon>Bovinae</taxon>
        <taxon>Bos</taxon>
    </lineage>
</organism>
<evidence type="ECO:0000250" key="1"/>
<evidence type="ECO:0000250" key="2">
    <source>
        <dbReference type="UniProtKB" id="P05402"/>
    </source>
</evidence>
<evidence type="ECO:0000255" key="3"/>
<evidence type="ECO:0000305" key="4"/>
<dbReference type="EMBL" id="M27240">
    <property type="protein sequence ID" value="AAA30729.1"/>
    <property type="molecule type" value="mRNA"/>
</dbReference>
<dbReference type="PIR" id="B34078">
    <property type="entry name" value="B34078"/>
</dbReference>
<dbReference type="RefSeq" id="NP_776585.1">
    <property type="nucleotide sequence ID" value="NM_174160.2"/>
</dbReference>
<dbReference type="SMR" id="P12402"/>
<dbReference type="FunCoup" id="P12402">
    <property type="interactions" value="72"/>
</dbReference>
<dbReference type="STRING" id="9913.ENSBTAP00000017916"/>
<dbReference type="GlyCosmos" id="P12402">
    <property type="glycosylation" value="2 sites, No reported glycans"/>
</dbReference>
<dbReference type="GlyGen" id="P12402">
    <property type="glycosylation" value="2 sites"/>
</dbReference>
<dbReference type="PaxDb" id="9913-ENSBTAP00000017916"/>
<dbReference type="GeneID" id="281430"/>
<dbReference type="KEGG" id="bta:281430"/>
<dbReference type="CTD" id="40172"/>
<dbReference type="eggNOG" id="ENOG502QYU3">
    <property type="taxonomic scope" value="Eukaryota"/>
</dbReference>
<dbReference type="InParanoid" id="P12402"/>
<dbReference type="OrthoDB" id="9599049at2759"/>
<dbReference type="Proteomes" id="UP000009136">
    <property type="component" value="Unplaced"/>
</dbReference>
<dbReference type="GO" id="GO:0005615">
    <property type="term" value="C:extracellular space"/>
    <property type="evidence" value="ECO:0000318"/>
    <property type="project" value="GO_Central"/>
</dbReference>
<dbReference type="GO" id="GO:0005179">
    <property type="term" value="F:hormone activity"/>
    <property type="evidence" value="ECO:0000318"/>
    <property type="project" value="GO_Central"/>
</dbReference>
<dbReference type="GO" id="GO:0005148">
    <property type="term" value="F:prolactin receptor binding"/>
    <property type="evidence" value="ECO:0000318"/>
    <property type="project" value="GO_Central"/>
</dbReference>
<dbReference type="GO" id="GO:0007166">
    <property type="term" value="P:cell surface receptor signaling pathway"/>
    <property type="evidence" value="ECO:0000318"/>
    <property type="project" value="GO_Central"/>
</dbReference>
<dbReference type="GO" id="GO:0007565">
    <property type="term" value="P:female pregnancy"/>
    <property type="evidence" value="ECO:0000318"/>
    <property type="project" value="GO_Central"/>
</dbReference>
<dbReference type="GO" id="GO:0030879">
    <property type="term" value="P:mammary gland development"/>
    <property type="evidence" value="ECO:0000318"/>
    <property type="project" value="GO_Central"/>
</dbReference>
<dbReference type="GO" id="GO:0009891">
    <property type="term" value="P:positive regulation of biosynthetic process"/>
    <property type="evidence" value="ECO:0007669"/>
    <property type="project" value="UniProtKB-ARBA"/>
</dbReference>
<dbReference type="GO" id="GO:1903489">
    <property type="term" value="P:positive regulation of lactation"/>
    <property type="evidence" value="ECO:0000318"/>
    <property type="project" value="GO_Central"/>
</dbReference>
<dbReference type="GO" id="GO:0046427">
    <property type="term" value="P:positive regulation of receptor signaling pathway via JAK-STAT"/>
    <property type="evidence" value="ECO:0000318"/>
    <property type="project" value="GO_Central"/>
</dbReference>
<dbReference type="GO" id="GO:0031667">
    <property type="term" value="P:response to nutrient levels"/>
    <property type="evidence" value="ECO:0000318"/>
    <property type="project" value="GO_Central"/>
</dbReference>
<dbReference type="CDD" id="cd10288">
    <property type="entry name" value="prolactin_like"/>
    <property type="match status" value="1"/>
</dbReference>
<dbReference type="FunFam" id="1.20.1250.10:FF:000039">
    <property type="entry name" value="Placental prolactin-related protein 2"/>
    <property type="match status" value="1"/>
</dbReference>
<dbReference type="Gene3D" id="1.20.1250.10">
    <property type="match status" value="1"/>
</dbReference>
<dbReference type="InterPro" id="IPR009079">
    <property type="entry name" value="4_helix_cytokine-like_core"/>
</dbReference>
<dbReference type="InterPro" id="IPR001400">
    <property type="entry name" value="Somatotropin/Prolactin"/>
</dbReference>
<dbReference type="InterPro" id="IPR018116">
    <property type="entry name" value="Somatotropin_CS"/>
</dbReference>
<dbReference type="PANTHER" id="PTHR11417:SF5">
    <property type="entry name" value="PROLACTIN"/>
    <property type="match status" value="1"/>
</dbReference>
<dbReference type="PANTHER" id="PTHR11417">
    <property type="entry name" value="SOMATOTROPIN,PROLACTIN"/>
    <property type="match status" value="1"/>
</dbReference>
<dbReference type="Pfam" id="PF00103">
    <property type="entry name" value="Hormone_1"/>
    <property type="match status" value="1"/>
</dbReference>
<dbReference type="PRINTS" id="PR00836">
    <property type="entry name" value="SOMATOTROPIN"/>
</dbReference>
<dbReference type="SUPFAM" id="SSF47266">
    <property type="entry name" value="4-helical cytokines"/>
    <property type="match status" value="1"/>
</dbReference>
<dbReference type="PROSITE" id="PS00266">
    <property type="entry name" value="SOMATOTROPIN_1"/>
    <property type="match status" value="1"/>
</dbReference>
<dbReference type="PROSITE" id="PS00338">
    <property type="entry name" value="SOMATOTROPIN_2"/>
    <property type="match status" value="1"/>
</dbReference>